<comment type="function">
    <text evidence="1">Catalyzes the dephosphorylation of undecaprenyl diphosphate (UPP). Confers resistance to bacitracin.</text>
</comment>
<comment type="catalytic activity">
    <reaction evidence="1">
        <text>di-trans,octa-cis-undecaprenyl diphosphate + H2O = di-trans,octa-cis-undecaprenyl phosphate + phosphate + H(+)</text>
        <dbReference type="Rhea" id="RHEA:28094"/>
        <dbReference type="ChEBI" id="CHEBI:15377"/>
        <dbReference type="ChEBI" id="CHEBI:15378"/>
        <dbReference type="ChEBI" id="CHEBI:43474"/>
        <dbReference type="ChEBI" id="CHEBI:58405"/>
        <dbReference type="ChEBI" id="CHEBI:60392"/>
        <dbReference type="EC" id="3.6.1.27"/>
    </reaction>
</comment>
<comment type="subcellular location">
    <subcellularLocation>
        <location evidence="1">Cell inner membrane</location>
        <topology evidence="1">Multi-pass membrane protein</topology>
    </subcellularLocation>
</comment>
<comment type="miscellaneous">
    <text>Bacitracin is thought to be involved in the inhibition of peptidoglycan synthesis by sequestering undecaprenyl diphosphate, thereby reducing the pool of lipid carrier available.</text>
</comment>
<comment type="similarity">
    <text evidence="1">Belongs to the UppP family.</text>
</comment>
<dbReference type="EC" id="3.6.1.27" evidence="1"/>
<dbReference type="EMBL" id="AE016823">
    <property type="protein sequence ID" value="AAS70055.1"/>
    <property type="molecule type" value="Genomic_DNA"/>
</dbReference>
<dbReference type="RefSeq" id="WP_001070489.1">
    <property type="nucleotide sequence ID" value="NC_005823.1"/>
</dbReference>
<dbReference type="SMR" id="P62465"/>
<dbReference type="KEGG" id="lic:LIC_11457"/>
<dbReference type="HOGENOM" id="CLU_060296_2_0_12"/>
<dbReference type="Proteomes" id="UP000007037">
    <property type="component" value="Chromosome I"/>
</dbReference>
<dbReference type="GO" id="GO:0005886">
    <property type="term" value="C:plasma membrane"/>
    <property type="evidence" value="ECO:0007669"/>
    <property type="project" value="UniProtKB-SubCell"/>
</dbReference>
<dbReference type="GO" id="GO:0050380">
    <property type="term" value="F:undecaprenyl-diphosphatase activity"/>
    <property type="evidence" value="ECO:0007669"/>
    <property type="project" value="UniProtKB-UniRule"/>
</dbReference>
<dbReference type="GO" id="GO:0071555">
    <property type="term" value="P:cell wall organization"/>
    <property type="evidence" value="ECO:0007669"/>
    <property type="project" value="UniProtKB-KW"/>
</dbReference>
<dbReference type="GO" id="GO:0009252">
    <property type="term" value="P:peptidoglycan biosynthetic process"/>
    <property type="evidence" value="ECO:0007669"/>
    <property type="project" value="UniProtKB-KW"/>
</dbReference>
<dbReference type="GO" id="GO:0008360">
    <property type="term" value="P:regulation of cell shape"/>
    <property type="evidence" value="ECO:0007669"/>
    <property type="project" value="UniProtKB-KW"/>
</dbReference>
<dbReference type="GO" id="GO:0046677">
    <property type="term" value="P:response to antibiotic"/>
    <property type="evidence" value="ECO:0007669"/>
    <property type="project" value="UniProtKB-UniRule"/>
</dbReference>
<dbReference type="HAMAP" id="MF_01006">
    <property type="entry name" value="Undec_diphosphatase"/>
    <property type="match status" value="1"/>
</dbReference>
<dbReference type="InterPro" id="IPR003824">
    <property type="entry name" value="UppP"/>
</dbReference>
<dbReference type="PANTHER" id="PTHR30622">
    <property type="entry name" value="UNDECAPRENYL-DIPHOSPHATASE"/>
    <property type="match status" value="1"/>
</dbReference>
<dbReference type="PANTHER" id="PTHR30622:SF3">
    <property type="entry name" value="UNDECAPRENYL-DIPHOSPHATASE"/>
    <property type="match status" value="1"/>
</dbReference>
<dbReference type="Pfam" id="PF02673">
    <property type="entry name" value="BacA"/>
    <property type="match status" value="1"/>
</dbReference>
<feature type="chain" id="PRO_0000151160" description="Undecaprenyl-diphosphatase">
    <location>
        <begin position="1"/>
        <end position="277"/>
    </location>
</feature>
<feature type="transmembrane region" description="Helical" evidence="1">
    <location>
        <begin position="19"/>
        <end position="39"/>
    </location>
</feature>
<feature type="transmembrane region" description="Helical" evidence="1">
    <location>
        <begin position="44"/>
        <end position="64"/>
    </location>
</feature>
<feature type="transmembrane region" description="Helical" evidence="1">
    <location>
        <begin position="89"/>
        <end position="109"/>
    </location>
</feature>
<feature type="transmembrane region" description="Helical" evidence="1">
    <location>
        <begin position="122"/>
        <end position="142"/>
    </location>
</feature>
<feature type="transmembrane region" description="Helical" evidence="1">
    <location>
        <begin position="154"/>
        <end position="174"/>
    </location>
</feature>
<feature type="transmembrane region" description="Helical" evidence="1">
    <location>
        <begin position="195"/>
        <end position="215"/>
    </location>
</feature>
<feature type="transmembrane region" description="Helical" evidence="1">
    <location>
        <begin position="224"/>
        <end position="244"/>
    </location>
</feature>
<feature type="transmembrane region" description="Helical" evidence="1">
    <location>
        <begin position="257"/>
        <end position="277"/>
    </location>
</feature>
<evidence type="ECO:0000255" key="1">
    <source>
        <dbReference type="HAMAP-Rule" id="MF_01006"/>
    </source>
</evidence>
<accession>P62465</accession>
<sequence>MNPYLNAFLRSIIEAITEFLPVSSTGHLFLFSSFFPFYGENVEFDDLFDIFIQSGAILSVLFLYREKFKSQIVSSFRYILKQNSDSEGFHFLIQICIGAFPILIAGFIAKKFLDTIKARPDLLEILSGAWIFGGVLILVAEWYFHQRPEEKKSIGFKDSILIGIFQCMALIPGMSRSAATIITARFLGKDTKSSAEFSFFLAVPVLLAAGIYKLIKYRSILNGNTIPVLMFGFLVSFLLCTLVIRWFLRYIQKHSFSVFGVYRILLGVGVLVLTKLI</sequence>
<protein>
    <recommendedName>
        <fullName evidence="1">Undecaprenyl-diphosphatase</fullName>
        <ecNumber evidence="1">3.6.1.27</ecNumber>
    </recommendedName>
    <alternativeName>
        <fullName evidence="1">Bacitracin resistance protein</fullName>
    </alternativeName>
    <alternativeName>
        <fullName evidence="1">Undecaprenyl pyrophosphate phosphatase</fullName>
    </alternativeName>
</protein>
<organism>
    <name type="scientific">Leptospira interrogans serogroup Icterohaemorrhagiae serovar copenhageni (strain Fiocruz L1-130)</name>
    <dbReference type="NCBI Taxonomy" id="267671"/>
    <lineage>
        <taxon>Bacteria</taxon>
        <taxon>Pseudomonadati</taxon>
        <taxon>Spirochaetota</taxon>
        <taxon>Spirochaetia</taxon>
        <taxon>Leptospirales</taxon>
        <taxon>Leptospiraceae</taxon>
        <taxon>Leptospira</taxon>
    </lineage>
</organism>
<name>UPPP_LEPIC</name>
<gene>
    <name evidence="1" type="primary">uppP</name>
    <name type="synonym">bacA</name>
    <name type="synonym">upk</name>
    <name type="ordered locus">LIC_11457</name>
</gene>
<keyword id="KW-0046">Antibiotic resistance</keyword>
<keyword id="KW-0997">Cell inner membrane</keyword>
<keyword id="KW-1003">Cell membrane</keyword>
<keyword id="KW-0133">Cell shape</keyword>
<keyword id="KW-0961">Cell wall biogenesis/degradation</keyword>
<keyword id="KW-0378">Hydrolase</keyword>
<keyword id="KW-0472">Membrane</keyword>
<keyword id="KW-0573">Peptidoglycan synthesis</keyword>
<keyword id="KW-0812">Transmembrane</keyword>
<keyword id="KW-1133">Transmembrane helix</keyword>
<proteinExistence type="inferred from homology"/>
<reference key="1">
    <citation type="journal article" date="2004" name="J. Bacteriol.">
        <title>Comparative genomics of two Leptospira interrogans serovars reveals novel insights into physiology and pathogenesis.</title>
        <authorList>
            <person name="Nascimento A.L.T.O."/>
            <person name="Ko A.I."/>
            <person name="Martins E.A.L."/>
            <person name="Monteiro-Vitorello C.B."/>
            <person name="Ho P.L."/>
            <person name="Haake D.A."/>
            <person name="Verjovski-Almeida S."/>
            <person name="Hartskeerl R.A."/>
            <person name="Marques M.V."/>
            <person name="Oliveira M.C."/>
            <person name="Menck C.F.M."/>
            <person name="Leite L.C.C."/>
            <person name="Carrer H."/>
            <person name="Coutinho L.L."/>
            <person name="Degrave W.M."/>
            <person name="Dellagostin O.A."/>
            <person name="El-Dorry H."/>
            <person name="Ferro E.S."/>
            <person name="Ferro M.I.T."/>
            <person name="Furlan L.R."/>
            <person name="Gamberini M."/>
            <person name="Giglioti E.A."/>
            <person name="Goes-Neto A."/>
            <person name="Goldman G.H."/>
            <person name="Goldman M.H.S."/>
            <person name="Harakava R."/>
            <person name="Jeronimo S.M.B."/>
            <person name="Junqueira-de-Azevedo I.L.M."/>
            <person name="Kimura E.T."/>
            <person name="Kuramae E.E."/>
            <person name="Lemos E.G.M."/>
            <person name="Lemos M.V.F."/>
            <person name="Marino C.L."/>
            <person name="Nunes L.R."/>
            <person name="de Oliveira R.C."/>
            <person name="Pereira G.G."/>
            <person name="Reis M.S."/>
            <person name="Schriefer A."/>
            <person name="Siqueira W.J."/>
            <person name="Sommer P."/>
            <person name="Tsai S.M."/>
            <person name="Simpson A.J.G."/>
            <person name="Ferro J.A."/>
            <person name="Camargo L.E.A."/>
            <person name="Kitajima J.P."/>
            <person name="Setubal J.C."/>
            <person name="Van Sluys M.A."/>
        </authorList>
    </citation>
    <scope>NUCLEOTIDE SEQUENCE [LARGE SCALE GENOMIC DNA]</scope>
    <source>
        <strain>Fiocruz L1-130</strain>
    </source>
</reference>